<dbReference type="EC" id="6.1.1.11" evidence="1"/>
<dbReference type="EMBL" id="AE014184">
    <property type="protein sequence ID" value="AAO44823.1"/>
    <property type="molecule type" value="Genomic_DNA"/>
</dbReference>
<dbReference type="RefSeq" id="WP_011102753.1">
    <property type="nucleotide sequence ID" value="NC_004572.3"/>
</dbReference>
<dbReference type="SMR" id="Q83FJ7"/>
<dbReference type="STRING" id="203267.TWT_726"/>
<dbReference type="KEGG" id="twh:TWT_726"/>
<dbReference type="eggNOG" id="COG0172">
    <property type="taxonomic scope" value="Bacteria"/>
</dbReference>
<dbReference type="HOGENOM" id="CLU_023797_0_1_11"/>
<dbReference type="OrthoDB" id="9804647at2"/>
<dbReference type="UniPathway" id="UPA00906">
    <property type="reaction ID" value="UER00895"/>
</dbReference>
<dbReference type="Proteomes" id="UP000002200">
    <property type="component" value="Chromosome"/>
</dbReference>
<dbReference type="GO" id="GO:0005737">
    <property type="term" value="C:cytoplasm"/>
    <property type="evidence" value="ECO:0007669"/>
    <property type="project" value="UniProtKB-SubCell"/>
</dbReference>
<dbReference type="GO" id="GO:0005524">
    <property type="term" value="F:ATP binding"/>
    <property type="evidence" value="ECO:0007669"/>
    <property type="project" value="UniProtKB-UniRule"/>
</dbReference>
<dbReference type="GO" id="GO:0004828">
    <property type="term" value="F:serine-tRNA ligase activity"/>
    <property type="evidence" value="ECO:0007669"/>
    <property type="project" value="UniProtKB-UniRule"/>
</dbReference>
<dbReference type="GO" id="GO:0016260">
    <property type="term" value="P:selenocysteine biosynthetic process"/>
    <property type="evidence" value="ECO:0007669"/>
    <property type="project" value="UniProtKB-UniRule"/>
</dbReference>
<dbReference type="GO" id="GO:0006434">
    <property type="term" value="P:seryl-tRNA aminoacylation"/>
    <property type="evidence" value="ECO:0007669"/>
    <property type="project" value="UniProtKB-UniRule"/>
</dbReference>
<dbReference type="CDD" id="cd00770">
    <property type="entry name" value="SerRS_core"/>
    <property type="match status" value="1"/>
</dbReference>
<dbReference type="Gene3D" id="3.30.930.10">
    <property type="entry name" value="Bira Bifunctional Protein, Domain 2"/>
    <property type="match status" value="1"/>
</dbReference>
<dbReference type="Gene3D" id="1.10.287.40">
    <property type="entry name" value="Serine-tRNA synthetase, tRNA binding domain"/>
    <property type="match status" value="1"/>
</dbReference>
<dbReference type="HAMAP" id="MF_00176">
    <property type="entry name" value="Ser_tRNA_synth_type1"/>
    <property type="match status" value="1"/>
</dbReference>
<dbReference type="InterPro" id="IPR002314">
    <property type="entry name" value="aa-tRNA-synt_IIb"/>
</dbReference>
<dbReference type="InterPro" id="IPR006195">
    <property type="entry name" value="aa-tRNA-synth_II"/>
</dbReference>
<dbReference type="InterPro" id="IPR045864">
    <property type="entry name" value="aa-tRNA-synth_II/BPL/LPL"/>
</dbReference>
<dbReference type="InterPro" id="IPR002317">
    <property type="entry name" value="Ser-tRNA-ligase_type_1"/>
</dbReference>
<dbReference type="InterPro" id="IPR015866">
    <property type="entry name" value="Ser-tRNA-synth_1_N"/>
</dbReference>
<dbReference type="InterPro" id="IPR042103">
    <property type="entry name" value="SerRS_1_N_sf"/>
</dbReference>
<dbReference type="InterPro" id="IPR033729">
    <property type="entry name" value="SerRS_core"/>
</dbReference>
<dbReference type="InterPro" id="IPR010978">
    <property type="entry name" value="tRNA-bd_arm"/>
</dbReference>
<dbReference type="NCBIfam" id="TIGR00414">
    <property type="entry name" value="serS"/>
    <property type="match status" value="1"/>
</dbReference>
<dbReference type="PANTHER" id="PTHR11778">
    <property type="entry name" value="SERYL-TRNA SYNTHETASE"/>
    <property type="match status" value="1"/>
</dbReference>
<dbReference type="Pfam" id="PF02403">
    <property type="entry name" value="Seryl_tRNA_N"/>
    <property type="match status" value="1"/>
</dbReference>
<dbReference type="Pfam" id="PF00587">
    <property type="entry name" value="tRNA-synt_2b"/>
    <property type="match status" value="1"/>
</dbReference>
<dbReference type="PIRSF" id="PIRSF001529">
    <property type="entry name" value="Ser-tRNA-synth_IIa"/>
    <property type="match status" value="1"/>
</dbReference>
<dbReference type="PRINTS" id="PR00981">
    <property type="entry name" value="TRNASYNTHSER"/>
</dbReference>
<dbReference type="SUPFAM" id="SSF55681">
    <property type="entry name" value="Class II aaRS and biotin synthetases"/>
    <property type="match status" value="1"/>
</dbReference>
<dbReference type="SUPFAM" id="SSF46589">
    <property type="entry name" value="tRNA-binding arm"/>
    <property type="match status" value="1"/>
</dbReference>
<dbReference type="PROSITE" id="PS50862">
    <property type="entry name" value="AA_TRNA_LIGASE_II"/>
    <property type="match status" value="1"/>
</dbReference>
<keyword id="KW-0030">Aminoacyl-tRNA synthetase</keyword>
<keyword id="KW-0067">ATP-binding</keyword>
<keyword id="KW-0963">Cytoplasm</keyword>
<keyword id="KW-0436">Ligase</keyword>
<keyword id="KW-0547">Nucleotide-binding</keyword>
<keyword id="KW-0648">Protein biosynthesis</keyword>
<keyword id="KW-1185">Reference proteome</keyword>
<proteinExistence type="inferred from homology"/>
<gene>
    <name evidence="1" type="primary">serS</name>
    <name type="ordered locus">TWT_726</name>
</gene>
<protein>
    <recommendedName>
        <fullName evidence="1">Serine--tRNA ligase</fullName>
        <ecNumber evidence="1">6.1.1.11</ecNumber>
    </recommendedName>
    <alternativeName>
        <fullName evidence="1">Seryl-tRNA synthetase</fullName>
        <shortName evidence="1">SerRS</shortName>
    </alternativeName>
    <alternativeName>
        <fullName evidence="1">Seryl-tRNA(Ser/Sec) synthetase</fullName>
    </alternativeName>
</protein>
<sequence>MIDPEILVNTPDIVRLSQKKRGESQSIVEDALIARRNLRTAINNFETLRAEQNVLSKKIAGSEDSDRPELMRVANLLAERVKNAREEQEKANSEWKKLLFEIPNIVSSEAPYGVEDKCAVMKTVGDIPEFDFEPADHLQLGEQLDAIDVSRGVKVSGTRFYFLKGWGARLELAVMNLALDLALKSGLTLLITPTLVKPEIMLGTGFLGRHEGEVYRLPSGYYLTGTSEVAIAGYHSDEILDISSGPIRYAGWSSCYRREAGSHGRDTRGIMRVHQFSKLEMFSYVHPQQSTRELEHIVSMQEKMLNLLEIPYRVSDIAAEELGTSASRKYDLEAWIPSQNTWREVTSASDCTTFQARRLNVRYRDESGRTGYVATLNGTLATTRFLVAILENHQTSNGSIRVPEALRPLLGQDVIER</sequence>
<accession>Q83FJ7</accession>
<evidence type="ECO:0000255" key="1">
    <source>
        <dbReference type="HAMAP-Rule" id="MF_00176"/>
    </source>
</evidence>
<feature type="chain" id="PRO_0000122151" description="Serine--tRNA ligase">
    <location>
        <begin position="1"/>
        <end position="417"/>
    </location>
</feature>
<feature type="binding site" evidence="1">
    <location>
        <begin position="226"/>
        <end position="228"/>
    </location>
    <ligand>
        <name>L-serine</name>
        <dbReference type="ChEBI" id="CHEBI:33384"/>
    </ligand>
</feature>
<feature type="binding site" evidence="1">
    <location>
        <begin position="257"/>
        <end position="259"/>
    </location>
    <ligand>
        <name>ATP</name>
        <dbReference type="ChEBI" id="CHEBI:30616"/>
    </ligand>
</feature>
<feature type="binding site" evidence="1">
    <location>
        <position position="273"/>
    </location>
    <ligand>
        <name>ATP</name>
        <dbReference type="ChEBI" id="CHEBI:30616"/>
    </ligand>
</feature>
<feature type="binding site" evidence="1">
    <location>
        <position position="280"/>
    </location>
    <ligand>
        <name>L-serine</name>
        <dbReference type="ChEBI" id="CHEBI:33384"/>
    </ligand>
</feature>
<feature type="binding site" evidence="1">
    <location>
        <begin position="344"/>
        <end position="347"/>
    </location>
    <ligand>
        <name>ATP</name>
        <dbReference type="ChEBI" id="CHEBI:30616"/>
    </ligand>
</feature>
<feature type="binding site" evidence="1">
    <location>
        <position position="379"/>
    </location>
    <ligand>
        <name>L-serine</name>
        <dbReference type="ChEBI" id="CHEBI:33384"/>
    </ligand>
</feature>
<organism>
    <name type="scientific">Tropheryma whipplei (strain Twist)</name>
    <name type="common">Whipple's bacillus</name>
    <dbReference type="NCBI Taxonomy" id="203267"/>
    <lineage>
        <taxon>Bacteria</taxon>
        <taxon>Bacillati</taxon>
        <taxon>Actinomycetota</taxon>
        <taxon>Actinomycetes</taxon>
        <taxon>Micrococcales</taxon>
        <taxon>Tropherymataceae</taxon>
        <taxon>Tropheryma</taxon>
    </lineage>
</organism>
<name>SYS_TROWT</name>
<reference key="1">
    <citation type="journal article" date="2003" name="Genome Res.">
        <title>Tropheryma whipplei twist: a human pathogenic Actinobacteria with a reduced genome.</title>
        <authorList>
            <person name="Raoult D."/>
            <person name="Ogata H."/>
            <person name="Audic S."/>
            <person name="Robert C."/>
            <person name="Suhre K."/>
            <person name="Drancourt M."/>
            <person name="Claverie J.-M."/>
        </authorList>
    </citation>
    <scope>NUCLEOTIDE SEQUENCE [LARGE SCALE GENOMIC DNA]</scope>
    <source>
        <strain>Twist</strain>
    </source>
</reference>
<comment type="function">
    <text evidence="1">Catalyzes the attachment of serine to tRNA(Ser). Is also able to aminoacylate tRNA(Sec) with serine, to form the misacylated tRNA L-seryl-tRNA(Sec), which will be further converted into selenocysteinyl-tRNA(Sec).</text>
</comment>
<comment type="catalytic activity">
    <reaction evidence="1">
        <text>tRNA(Ser) + L-serine + ATP = L-seryl-tRNA(Ser) + AMP + diphosphate + H(+)</text>
        <dbReference type="Rhea" id="RHEA:12292"/>
        <dbReference type="Rhea" id="RHEA-COMP:9669"/>
        <dbReference type="Rhea" id="RHEA-COMP:9703"/>
        <dbReference type="ChEBI" id="CHEBI:15378"/>
        <dbReference type="ChEBI" id="CHEBI:30616"/>
        <dbReference type="ChEBI" id="CHEBI:33019"/>
        <dbReference type="ChEBI" id="CHEBI:33384"/>
        <dbReference type="ChEBI" id="CHEBI:78442"/>
        <dbReference type="ChEBI" id="CHEBI:78533"/>
        <dbReference type="ChEBI" id="CHEBI:456215"/>
        <dbReference type="EC" id="6.1.1.11"/>
    </reaction>
</comment>
<comment type="catalytic activity">
    <reaction evidence="1">
        <text>tRNA(Sec) + L-serine + ATP = L-seryl-tRNA(Sec) + AMP + diphosphate + H(+)</text>
        <dbReference type="Rhea" id="RHEA:42580"/>
        <dbReference type="Rhea" id="RHEA-COMP:9742"/>
        <dbReference type="Rhea" id="RHEA-COMP:10128"/>
        <dbReference type="ChEBI" id="CHEBI:15378"/>
        <dbReference type="ChEBI" id="CHEBI:30616"/>
        <dbReference type="ChEBI" id="CHEBI:33019"/>
        <dbReference type="ChEBI" id="CHEBI:33384"/>
        <dbReference type="ChEBI" id="CHEBI:78442"/>
        <dbReference type="ChEBI" id="CHEBI:78533"/>
        <dbReference type="ChEBI" id="CHEBI:456215"/>
        <dbReference type="EC" id="6.1.1.11"/>
    </reaction>
</comment>
<comment type="pathway">
    <text evidence="1">Aminoacyl-tRNA biosynthesis; selenocysteinyl-tRNA(Sec) biosynthesis; L-seryl-tRNA(Sec) from L-serine and tRNA(Sec): step 1/1.</text>
</comment>
<comment type="subunit">
    <text evidence="1">Homodimer. The tRNA molecule binds across the dimer.</text>
</comment>
<comment type="subcellular location">
    <subcellularLocation>
        <location evidence="1">Cytoplasm</location>
    </subcellularLocation>
</comment>
<comment type="domain">
    <text evidence="1">Consists of two distinct domains, a catalytic core and a N-terminal extension that is involved in tRNA binding.</text>
</comment>
<comment type="similarity">
    <text evidence="1">Belongs to the class-II aminoacyl-tRNA synthetase family. Type-1 seryl-tRNA synthetase subfamily.</text>
</comment>